<feature type="chain" id="PRO_0000266949" description="Probable GTP-binding protein EngB">
    <location>
        <begin position="1"/>
        <end position="210"/>
    </location>
</feature>
<feature type="domain" description="EngB-type G" evidence="1">
    <location>
        <begin position="25"/>
        <end position="199"/>
    </location>
</feature>
<feature type="binding site" evidence="1">
    <location>
        <begin position="33"/>
        <end position="40"/>
    </location>
    <ligand>
        <name>GTP</name>
        <dbReference type="ChEBI" id="CHEBI:37565"/>
    </ligand>
</feature>
<feature type="binding site" evidence="1">
    <location>
        <position position="40"/>
    </location>
    <ligand>
        <name>Mg(2+)</name>
        <dbReference type="ChEBI" id="CHEBI:18420"/>
    </ligand>
</feature>
<feature type="binding site" evidence="1">
    <location>
        <begin position="60"/>
        <end position="64"/>
    </location>
    <ligand>
        <name>GTP</name>
        <dbReference type="ChEBI" id="CHEBI:37565"/>
    </ligand>
</feature>
<feature type="binding site" evidence="1">
    <location>
        <position position="62"/>
    </location>
    <ligand>
        <name>Mg(2+)</name>
        <dbReference type="ChEBI" id="CHEBI:18420"/>
    </ligand>
</feature>
<feature type="binding site" evidence="1">
    <location>
        <begin position="78"/>
        <end position="81"/>
    </location>
    <ligand>
        <name>GTP</name>
        <dbReference type="ChEBI" id="CHEBI:37565"/>
    </ligand>
</feature>
<feature type="binding site" evidence="1">
    <location>
        <begin position="145"/>
        <end position="148"/>
    </location>
    <ligand>
        <name>GTP</name>
        <dbReference type="ChEBI" id="CHEBI:37565"/>
    </ligand>
</feature>
<feature type="binding site" evidence="1">
    <location>
        <begin position="178"/>
        <end position="180"/>
    </location>
    <ligand>
        <name>GTP</name>
        <dbReference type="ChEBI" id="CHEBI:37565"/>
    </ligand>
</feature>
<sequence>MTNLNYQQTHFVMSAPDIRHLPSDTGIEVAFAGRSNAGKSSALNTLTNQKSLARTSKTPGRTQLINLFEVADGKRLVDLPGYGYAEVPEEMKRKWQRALGEYLEKRQSLQGLVVLMDIRHPLKDLDQQMIEWAVDSNIAVLVLLTKADKLASGARKALLNMVREAVLAFNGDVQVETFSSLKKQGVDKLRQKLDTWFSEMQPVEETQDGE</sequence>
<accession>Q83PF4</accession>
<accession>Q7UB64</accession>
<keyword id="KW-0131">Cell cycle</keyword>
<keyword id="KW-0132">Cell division</keyword>
<keyword id="KW-0342">GTP-binding</keyword>
<keyword id="KW-0460">Magnesium</keyword>
<keyword id="KW-0479">Metal-binding</keyword>
<keyword id="KW-0547">Nucleotide-binding</keyword>
<keyword id="KW-1185">Reference proteome</keyword>
<keyword id="KW-0717">Septation</keyword>
<gene>
    <name evidence="1" type="primary">engB</name>
    <name type="ordered locus">SF3935</name>
    <name type="ordered locus">S3811</name>
</gene>
<name>ENGB_SHIFL</name>
<proteinExistence type="inferred from homology"/>
<protein>
    <recommendedName>
        <fullName evidence="1">Probable GTP-binding protein EngB</fullName>
    </recommendedName>
</protein>
<organism>
    <name type="scientific">Shigella flexneri</name>
    <dbReference type="NCBI Taxonomy" id="623"/>
    <lineage>
        <taxon>Bacteria</taxon>
        <taxon>Pseudomonadati</taxon>
        <taxon>Pseudomonadota</taxon>
        <taxon>Gammaproteobacteria</taxon>
        <taxon>Enterobacterales</taxon>
        <taxon>Enterobacteriaceae</taxon>
        <taxon>Shigella</taxon>
    </lineage>
</organism>
<dbReference type="EMBL" id="AE005674">
    <property type="protein sequence ID" value="AAN45370.2"/>
    <property type="status" value="ALT_INIT"/>
    <property type="molecule type" value="Genomic_DNA"/>
</dbReference>
<dbReference type="EMBL" id="AE014073">
    <property type="protein sequence ID" value="AAP18828.1"/>
    <property type="status" value="ALT_INIT"/>
    <property type="molecule type" value="Genomic_DNA"/>
</dbReference>
<dbReference type="SMR" id="Q83PF4"/>
<dbReference type="STRING" id="198214.SF3935"/>
<dbReference type="PaxDb" id="198214-SF3935"/>
<dbReference type="KEGG" id="sfl:SF3935"/>
<dbReference type="KEGG" id="sfx:S3811"/>
<dbReference type="PATRIC" id="fig|198214.7.peg.4637"/>
<dbReference type="HOGENOM" id="CLU_033732_1_0_6"/>
<dbReference type="Proteomes" id="UP000001006">
    <property type="component" value="Chromosome"/>
</dbReference>
<dbReference type="Proteomes" id="UP000002673">
    <property type="component" value="Chromosome"/>
</dbReference>
<dbReference type="GO" id="GO:0005829">
    <property type="term" value="C:cytosol"/>
    <property type="evidence" value="ECO:0007669"/>
    <property type="project" value="TreeGrafter"/>
</dbReference>
<dbReference type="GO" id="GO:0005525">
    <property type="term" value="F:GTP binding"/>
    <property type="evidence" value="ECO:0007669"/>
    <property type="project" value="UniProtKB-UniRule"/>
</dbReference>
<dbReference type="GO" id="GO:0046872">
    <property type="term" value="F:metal ion binding"/>
    <property type="evidence" value="ECO:0007669"/>
    <property type="project" value="UniProtKB-KW"/>
</dbReference>
<dbReference type="GO" id="GO:0000917">
    <property type="term" value="P:division septum assembly"/>
    <property type="evidence" value="ECO:0007669"/>
    <property type="project" value="UniProtKB-KW"/>
</dbReference>
<dbReference type="CDD" id="cd01876">
    <property type="entry name" value="YihA_EngB"/>
    <property type="match status" value="1"/>
</dbReference>
<dbReference type="FunFam" id="3.40.50.300:FF:000098">
    <property type="entry name" value="Probable GTP-binding protein EngB"/>
    <property type="match status" value="1"/>
</dbReference>
<dbReference type="Gene3D" id="3.40.50.300">
    <property type="entry name" value="P-loop containing nucleotide triphosphate hydrolases"/>
    <property type="match status" value="1"/>
</dbReference>
<dbReference type="HAMAP" id="MF_00321">
    <property type="entry name" value="GTPase_EngB"/>
    <property type="match status" value="1"/>
</dbReference>
<dbReference type="InterPro" id="IPR030393">
    <property type="entry name" value="G_ENGB_dom"/>
</dbReference>
<dbReference type="InterPro" id="IPR006073">
    <property type="entry name" value="GTP-bd"/>
</dbReference>
<dbReference type="InterPro" id="IPR019987">
    <property type="entry name" value="GTP-bd_ribosome_bio_YsxC"/>
</dbReference>
<dbReference type="InterPro" id="IPR027417">
    <property type="entry name" value="P-loop_NTPase"/>
</dbReference>
<dbReference type="NCBIfam" id="TIGR03598">
    <property type="entry name" value="GTPase_YsxC"/>
    <property type="match status" value="1"/>
</dbReference>
<dbReference type="PANTHER" id="PTHR11649:SF13">
    <property type="entry name" value="ENGB-TYPE G DOMAIN-CONTAINING PROTEIN"/>
    <property type="match status" value="1"/>
</dbReference>
<dbReference type="PANTHER" id="PTHR11649">
    <property type="entry name" value="MSS1/TRME-RELATED GTP-BINDING PROTEIN"/>
    <property type="match status" value="1"/>
</dbReference>
<dbReference type="Pfam" id="PF01926">
    <property type="entry name" value="MMR_HSR1"/>
    <property type="match status" value="1"/>
</dbReference>
<dbReference type="SUPFAM" id="SSF52540">
    <property type="entry name" value="P-loop containing nucleoside triphosphate hydrolases"/>
    <property type="match status" value="1"/>
</dbReference>
<dbReference type="PROSITE" id="PS51706">
    <property type="entry name" value="G_ENGB"/>
    <property type="match status" value="1"/>
</dbReference>
<evidence type="ECO:0000255" key="1">
    <source>
        <dbReference type="HAMAP-Rule" id="MF_00321"/>
    </source>
</evidence>
<evidence type="ECO:0000305" key="2"/>
<reference key="1">
    <citation type="journal article" date="2002" name="Nucleic Acids Res.">
        <title>Genome sequence of Shigella flexneri 2a: insights into pathogenicity through comparison with genomes of Escherichia coli K12 and O157.</title>
        <authorList>
            <person name="Jin Q."/>
            <person name="Yuan Z."/>
            <person name="Xu J."/>
            <person name="Wang Y."/>
            <person name="Shen Y."/>
            <person name="Lu W."/>
            <person name="Wang J."/>
            <person name="Liu H."/>
            <person name="Yang J."/>
            <person name="Yang F."/>
            <person name="Zhang X."/>
            <person name="Zhang J."/>
            <person name="Yang G."/>
            <person name="Wu H."/>
            <person name="Qu D."/>
            <person name="Dong J."/>
            <person name="Sun L."/>
            <person name="Xue Y."/>
            <person name="Zhao A."/>
            <person name="Gao Y."/>
            <person name="Zhu J."/>
            <person name="Kan B."/>
            <person name="Ding K."/>
            <person name="Chen S."/>
            <person name="Cheng H."/>
            <person name="Yao Z."/>
            <person name="He B."/>
            <person name="Chen R."/>
            <person name="Ma D."/>
            <person name="Qiang B."/>
            <person name="Wen Y."/>
            <person name="Hou Y."/>
            <person name="Yu J."/>
        </authorList>
    </citation>
    <scope>NUCLEOTIDE SEQUENCE [LARGE SCALE GENOMIC DNA]</scope>
    <source>
        <strain>301 / Serotype 2a</strain>
    </source>
</reference>
<reference key="2">
    <citation type="journal article" date="2003" name="Infect. Immun.">
        <title>Complete genome sequence and comparative genomics of Shigella flexneri serotype 2a strain 2457T.</title>
        <authorList>
            <person name="Wei J."/>
            <person name="Goldberg M.B."/>
            <person name="Burland V."/>
            <person name="Venkatesan M.M."/>
            <person name="Deng W."/>
            <person name="Fournier G."/>
            <person name="Mayhew G.F."/>
            <person name="Plunkett G. III"/>
            <person name="Rose D.J."/>
            <person name="Darling A."/>
            <person name="Mau B."/>
            <person name="Perna N.T."/>
            <person name="Payne S.M."/>
            <person name="Runyen-Janecky L.J."/>
            <person name="Zhou S."/>
            <person name="Schwartz D.C."/>
            <person name="Blattner F.R."/>
        </authorList>
    </citation>
    <scope>NUCLEOTIDE SEQUENCE [LARGE SCALE GENOMIC DNA]</scope>
    <source>
        <strain>ATCC 700930 / 2457T / Serotype 2a</strain>
    </source>
</reference>
<comment type="function">
    <text evidence="1">Necessary for normal cell division and for the maintenance of normal septation.</text>
</comment>
<comment type="cofactor">
    <cofactor evidence="1">
        <name>Mg(2+)</name>
        <dbReference type="ChEBI" id="CHEBI:18420"/>
    </cofactor>
</comment>
<comment type="similarity">
    <text evidence="1">Belongs to the TRAFAC class TrmE-Era-EngA-EngB-Septin-like GTPase superfamily. EngB GTPase family.</text>
</comment>
<comment type="sequence caution" evidence="2">
    <conflict type="erroneous initiation">
        <sequence resource="EMBL-CDS" id="AAN45370"/>
    </conflict>
</comment>
<comment type="sequence caution" evidence="2">
    <conflict type="erroneous initiation">
        <sequence resource="EMBL-CDS" id="AAP18828"/>
    </conflict>
</comment>